<reference key="1">
    <citation type="journal article" date="2007" name="Proc. Natl. Acad. Sci. U.S.A.">
        <title>Genome plasticity of BCG and impact on vaccine efficacy.</title>
        <authorList>
            <person name="Brosch R."/>
            <person name="Gordon S.V."/>
            <person name="Garnier T."/>
            <person name="Eiglmeier K."/>
            <person name="Frigui W."/>
            <person name="Valenti P."/>
            <person name="Dos Santos S."/>
            <person name="Duthoy S."/>
            <person name="Lacroix C."/>
            <person name="Garcia-Pelayo C."/>
            <person name="Inwald J.K."/>
            <person name="Golby P."/>
            <person name="Garcia J.N."/>
            <person name="Hewinson R.G."/>
            <person name="Behr M.A."/>
            <person name="Quail M.A."/>
            <person name="Churcher C."/>
            <person name="Barrell B.G."/>
            <person name="Parkhill J."/>
            <person name="Cole S.T."/>
        </authorList>
    </citation>
    <scope>NUCLEOTIDE SEQUENCE [LARGE SCALE GENOMIC DNA]</scope>
    <source>
        <strain>BCG / Pasteur 1173P2</strain>
    </source>
</reference>
<accession>A1KG32</accession>
<feature type="chain" id="PRO_0000341776" description="2-succinyl-5-enolpyruvyl-6-hydroxy-3-cyclohexene-1-carboxylate synthase">
    <location>
        <begin position="1"/>
        <end position="554"/>
    </location>
</feature>
<keyword id="KW-0460">Magnesium</keyword>
<keyword id="KW-0464">Manganese</keyword>
<keyword id="KW-0474">Menaquinone biosynthesis</keyword>
<keyword id="KW-0479">Metal-binding</keyword>
<keyword id="KW-0786">Thiamine pyrophosphate</keyword>
<keyword id="KW-0808">Transferase</keyword>
<gene>
    <name evidence="1" type="primary">menD</name>
    <name type="ordered locus">BCG_0600</name>
</gene>
<sequence>MNPSTTQARVVVDELIRGGVRDVVLCPGSRNAPLAFALQDADRSGRIRLHVRIDERTAGYLAIGLAIGAGAPVCVAMTSGTAVANLGPAVVEANYARVPLIVLSANRPYELLGTGANQTMEQLGYFGTQVRASISLGLAEDAPERTSALNATWRSATCRVLAAATGARTANAGPVHFDIPLREPLVPDPEPLGAVTPPGRPAGKPWTYTPPVTFDQPLDIDLSVDTVVISGHGAGVHPNLAALPTVAEPTAPRSGDNPLHPLALPLLRPQQVIMLGRPTLHRPVSVLLADAEVPVFALTTGPRWPDVSGNSQATGTRAVTTGAPRPAWLDRCAAMNRHAIAAVREQLAAHPLTTGLHVAAAVSHALRPGDQLVLGASNPVRDVALAGLDTRGIRVRSNRGVAGIDGTVSTAIGAALAYEGAHERTGSPDSPPRTIALIGDLTFVHDSSGLLIGPTEPIPRSLTIVVSNDNGGGIFELLEQGDPRFSDVSSRIFGTPHDVDVGALCRAYHVESRQIEVDELGPTLDQPGAGMRVLEVKADRSSLRQLHAAIKAAL</sequence>
<name>MEND_MYCBP</name>
<organism>
    <name type="scientific">Mycobacterium bovis (strain BCG / Pasteur 1173P2)</name>
    <dbReference type="NCBI Taxonomy" id="410289"/>
    <lineage>
        <taxon>Bacteria</taxon>
        <taxon>Bacillati</taxon>
        <taxon>Actinomycetota</taxon>
        <taxon>Actinomycetes</taxon>
        <taxon>Mycobacteriales</taxon>
        <taxon>Mycobacteriaceae</taxon>
        <taxon>Mycobacterium</taxon>
        <taxon>Mycobacterium tuberculosis complex</taxon>
    </lineage>
</organism>
<comment type="function">
    <text evidence="1">Catalyzes the thiamine diphosphate-dependent decarboxylation of 2-oxoglutarate and the subsequent addition of the resulting succinic semialdehyde-thiamine pyrophosphate anion to isochorismate to yield 2-succinyl-5-enolpyruvyl-6-hydroxy-3-cyclohexene-1-carboxylate (SEPHCHC).</text>
</comment>
<comment type="catalytic activity">
    <reaction evidence="1">
        <text>isochorismate + 2-oxoglutarate + H(+) = 5-enolpyruvoyl-6-hydroxy-2-succinyl-cyclohex-3-ene-1-carboxylate + CO2</text>
        <dbReference type="Rhea" id="RHEA:25593"/>
        <dbReference type="ChEBI" id="CHEBI:15378"/>
        <dbReference type="ChEBI" id="CHEBI:16526"/>
        <dbReference type="ChEBI" id="CHEBI:16810"/>
        <dbReference type="ChEBI" id="CHEBI:29780"/>
        <dbReference type="ChEBI" id="CHEBI:58818"/>
        <dbReference type="EC" id="2.2.1.9"/>
    </reaction>
</comment>
<comment type="cofactor">
    <cofactor evidence="1">
        <name>Mg(2+)</name>
        <dbReference type="ChEBI" id="CHEBI:18420"/>
    </cofactor>
    <cofactor evidence="1">
        <name>Mn(2+)</name>
        <dbReference type="ChEBI" id="CHEBI:29035"/>
    </cofactor>
</comment>
<comment type="cofactor">
    <cofactor evidence="1">
        <name>thiamine diphosphate</name>
        <dbReference type="ChEBI" id="CHEBI:58937"/>
    </cofactor>
    <text evidence="1">Binds 1 thiamine pyrophosphate per subunit.</text>
</comment>
<comment type="pathway">
    <text evidence="1">Quinol/quinone metabolism; 1,4-dihydroxy-2-naphthoate biosynthesis; 1,4-dihydroxy-2-naphthoate from chorismate: step 2/7.</text>
</comment>
<comment type="pathway">
    <text evidence="1">Quinol/quinone metabolism; menaquinone biosynthesis.</text>
</comment>
<comment type="subunit">
    <text evidence="1">Homodimer.</text>
</comment>
<comment type="similarity">
    <text evidence="1">Belongs to the TPP enzyme family. MenD subfamily.</text>
</comment>
<proteinExistence type="inferred from homology"/>
<evidence type="ECO:0000255" key="1">
    <source>
        <dbReference type="HAMAP-Rule" id="MF_01659"/>
    </source>
</evidence>
<protein>
    <recommendedName>
        <fullName evidence="1">2-succinyl-5-enolpyruvyl-6-hydroxy-3-cyclohexene-1-carboxylate synthase</fullName>
        <shortName evidence="1">SEPHCHC synthase</shortName>
        <ecNumber evidence="1">2.2.1.9</ecNumber>
    </recommendedName>
    <alternativeName>
        <fullName evidence="1">Menaquinone biosynthesis protein MenD</fullName>
    </alternativeName>
</protein>
<dbReference type="EC" id="2.2.1.9" evidence="1"/>
<dbReference type="EMBL" id="AM408590">
    <property type="protein sequence ID" value="CAL70585.1"/>
    <property type="molecule type" value="Genomic_DNA"/>
</dbReference>
<dbReference type="RefSeq" id="WP_003402927.1">
    <property type="nucleotide sequence ID" value="NC_008769.1"/>
</dbReference>
<dbReference type="SMR" id="A1KG32"/>
<dbReference type="KEGG" id="mbb:BCG_0600"/>
<dbReference type="HOGENOM" id="CLU_006051_4_1_11"/>
<dbReference type="UniPathway" id="UPA00079"/>
<dbReference type="UniPathway" id="UPA01057">
    <property type="reaction ID" value="UER00164"/>
</dbReference>
<dbReference type="Proteomes" id="UP000001472">
    <property type="component" value="Chromosome"/>
</dbReference>
<dbReference type="GO" id="GO:0070204">
    <property type="term" value="F:2-succinyl-5-enolpyruvyl-6-hydroxy-3-cyclohexene-1-carboxylic-acid synthase activity"/>
    <property type="evidence" value="ECO:0007669"/>
    <property type="project" value="UniProtKB-UniRule"/>
</dbReference>
<dbReference type="GO" id="GO:0000287">
    <property type="term" value="F:magnesium ion binding"/>
    <property type="evidence" value="ECO:0007669"/>
    <property type="project" value="UniProtKB-UniRule"/>
</dbReference>
<dbReference type="GO" id="GO:0030145">
    <property type="term" value="F:manganese ion binding"/>
    <property type="evidence" value="ECO:0007669"/>
    <property type="project" value="UniProtKB-UniRule"/>
</dbReference>
<dbReference type="GO" id="GO:0030976">
    <property type="term" value="F:thiamine pyrophosphate binding"/>
    <property type="evidence" value="ECO:0007669"/>
    <property type="project" value="UniProtKB-UniRule"/>
</dbReference>
<dbReference type="GO" id="GO:0009234">
    <property type="term" value="P:menaquinone biosynthetic process"/>
    <property type="evidence" value="ECO:0007669"/>
    <property type="project" value="UniProtKB-UniRule"/>
</dbReference>
<dbReference type="CDD" id="cd07037">
    <property type="entry name" value="TPP_PYR_MenD"/>
    <property type="match status" value="1"/>
</dbReference>
<dbReference type="CDD" id="cd02009">
    <property type="entry name" value="TPP_SHCHC_synthase"/>
    <property type="match status" value="1"/>
</dbReference>
<dbReference type="FunFam" id="3.40.50.970:FF:000066">
    <property type="entry name" value="2-succinyl-5-enolpyruvyl-6-hydroxy-3-cyclohexene-1-carboxylate synthase"/>
    <property type="match status" value="1"/>
</dbReference>
<dbReference type="FunFam" id="3.40.50.970:FF:000068">
    <property type="entry name" value="2-succinyl-5-enolpyruvyl-6-hydroxy-3-cyclohexene-1-carboxylate synthase"/>
    <property type="match status" value="1"/>
</dbReference>
<dbReference type="Gene3D" id="3.40.50.970">
    <property type="match status" value="2"/>
</dbReference>
<dbReference type="Gene3D" id="3.40.50.1220">
    <property type="entry name" value="TPP-binding domain"/>
    <property type="match status" value="1"/>
</dbReference>
<dbReference type="HAMAP" id="MF_01659">
    <property type="entry name" value="MenD"/>
    <property type="match status" value="1"/>
</dbReference>
<dbReference type="InterPro" id="IPR004433">
    <property type="entry name" value="MenaQ_synth_MenD"/>
</dbReference>
<dbReference type="InterPro" id="IPR029061">
    <property type="entry name" value="THDP-binding"/>
</dbReference>
<dbReference type="InterPro" id="IPR012001">
    <property type="entry name" value="Thiamin_PyroP_enz_TPP-bd_dom"/>
</dbReference>
<dbReference type="NCBIfam" id="TIGR00173">
    <property type="entry name" value="menD"/>
    <property type="match status" value="1"/>
</dbReference>
<dbReference type="PANTHER" id="PTHR42916">
    <property type="entry name" value="2-SUCCINYL-5-ENOLPYRUVYL-6-HYDROXY-3-CYCLOHEXENE-1-CARBOXYLATE SYNTHASE"/>
    <property type="match status" value="1"/>
</dbReference>
<dbReference type="PANTHER" id="PTHR42916:SF1">
    <property type="entry name" value="PROTEIN PHYLLO, CHLOROPLASTIC"/>
    <property type="match status" value="1"/>
</dbReference>
<dbReference type="Pfam" id="PF02776">
    <property type="entry name" value="TPP_enzyme_N"/>
    <property type="match status" value="1"/>
</dbReference>
<dbReference type="PIRSF" id="PIRSF004983">
    <property type="entry name" value="MenD"/>
    <property type="match status" value="1"/>
</dbReference>
<dbReference type="SUPFAM" id="SSF52518">
    <property type="entry name" value="Thiamin diphosphate-binding fold (THDP-binding)"/>
    <property type="match status" value="2"/>
</dbReference>